<protein>
    <recommendedName>
        <fullName evidence="1">Replication initiation control protein YabA</fullName>
    </recommendedName>
</protein>
<feature type="chain" id="PRO_0000211923" description="Replication initiation control protein YabA">
    <location>
        <begin position="1"/>
        <end position="113"/>
    </location>
</feature>
<feature type="binding site" evidence="1">
    <location>
        <position position="88"/>
    </location>
    <ligand>
        <name>Zn(2+)</name>
        <dbReference type="ChEBI" id="CHEBI:29105"/>
    </ligand>
</feature>
<feature type="binding site" evidence="1">
    <location>
        <position position="90"/>
    </location>
    <ligand>
        <name>Zn(2+)</name>
        <dbReference type="ChEBI" id="CHEBI:29105"/>
    </ligand>
</feature>
<feature type="binding site" evidence="1">
    <location>
        <position position="104"/>
    </location>
    <ligand>
        <name>Zn(2+)</name>
        <dbReference type="ChEBI" id="CHEBI:29105"/>
    </ligand>
</feature>
<feature type="binding site" evidence="1">
    <location>
        <position position="107"/>
    </location>
    <ligand>
        <name>Zn(2+)</name>
        <dbReference type="ChEBI" id="CHEBI:29105"/>
    </ligand>
</feature>
<proteinExistence type="inferred from homology"/>
<keyword id="KW-0963">Cytoplasm</keyword>
<keyword id="KW-0235">DNA replication</keyword>
<keyword id="KW-0236">DNA replication inhibitor</keyword>
<keyword id="KW-0479">Metal-binding</keyword>
<keyword id="KW-1185">Reference proteome</keyword>
<keyword id="KW-0862">Zinc</keyword>
<comment type="function">
    <text evidence="1">Involved in control of chromosome replication initiation. Inhibits the cooperative binding of DnaA to the oriC region, thus negatively regulating initiation of chromosome replication. Inhibits the ability of DnaA-ATP to form a helix on DNA; does not disassemble preformed DnaA-DNA helices. Decreases the residence time of DnaA on the chromosome at its binding sites (oriC, replication forks and promoter-binding sites). Tethers DnaA to the replication machinery via the DNA polymerase beta sliding clamp subunit (dnaN). Associates with oriC and other DnaA targets on the chromosome in a DnaA-dependent manner.</text>
</comment>
<comment type="cofactor">
    <cofactor evidence="1">
        <name>Zn(2+)</name>
        <dbReference type="ChEBI" id="CHEBI:29105"/>
    </cofactor>
    <text evidence="1">Binds 1 zinc ion per subunit.</text>
</comment>
<comment type="subunit">
    <text evidence="1">Homotetramer. Interacts with both DnaA and DnaN, acting as a bridge between these two proteins.</text>
</comment>
<comment type="subcellular location">
    <subcellularLocation>
        <location evidence="1">Cytoplasm</location>
        <location evidence="1">Nucleoid</location>
    </subcellularLocation>
    <text evidence="1">Localizes in tight foci, which correspond to the replisome at mid-cell throughout the cell cycle.</text>
</comment>
<comment type="similarity">
    <text evidence="1">Belongs to the YabA family.</text>
</comment>
<reference key="1">
    <citation type="journal article" date="2005" name="Proc. Natl. Acad. Sci. U.S.A.">
        <title>Whole genome sequence of Staphylococcus saprophyticus reveals the pathogenesis of uncomplicated urinary tract infection.</title>
        <authorList>
            <person name="Kuroda M."/>
            <person name="Yamashita A."/>
            <person name="Hirakawa H."/>
            <person name="Kumano M."/>
            <person name="Morikawa K."/>
            <person name="Higashide M."/>
            <person name="Maruyama A."/>
            <person name="Inose Y."/>
            <person name="Matoba K."/>
            <person name="Toh H."/>
            <person name="Kuhara S."/>
            <person name="Hattori M."/>
            <person name="Ohta T."/>
        </authorList>
    </citation>
    <scope>NUCLEOTIDE SEQUENCE [LARGE SCALE GENOMIC DNA]</scope>
    <source>
        <strain>ATCC 15305 / DSM 20229 / NCIMB 8711 / NCTC 7292 / S-41</strain>
    </source>
</reference>
<dbReference type="EMBL" id="AP008934">
    <property type="protein sequence ID" value="BAE19415.1"/>
    <property type="molecule type" value="Genomic_DNA"/>
</dbReference>
<dbReference type="RefSeq" id="WP_011303880.1">
    <property type="nucleotide sequence ID" value="NZ_MTGA01000029.1"/>
</dbReference>
<dbReference type="SMR" id="Q49UZ5"/>
<dbReference type="GeneID" id="3615658"/>
<dbReference type="KEGG" id="ssp:SSP2270"/>
<dbReference type="PATRIC" id="fig|342451.11.peg.2261"/>
<dbReference type="eggNOG" id="COG4467">
    <property type="taxonomic scope" value="Bacteria"/>
</dbReference>
<dbReference type="HOGENOM" id="CLU_157169_1_0_9"/>
<dbReference type="OrthoDB" id="2112130at2"/>
<dbReference type="Proteomes" id="UP000006371">
    <property type="component" value="Chromosome"/>
</dbReference>
<dbReference type="GO" id="GO:0009295">
    <property type="term" value="C:nucleoid"/>
    <property type="evidence" value="ECO:0007669"/>
    <property type="project" value="UniProtKB-SubCell"/>
</dbReference>
<dbReference type="GO" id="GO:0006260">
    <property type="term" value="P:DNA replication"/>
    <property type="evidence" value="ECO:0007669"/>
    <property type="project" value="UniProtKB-UniRule"/>
</dbReference>
<dbReference type="HAMAP" id="MF_01159">
    <property type="entry name" value="YabA"/>
    <property type="match status" value="1"/>
</dbReference>
<dbReference type="InterPro" id="IPR010377">
    <property type="entry name" value="YabA"/>
</dbReference>
<dbReference type="NCBIfam" id="NF009641">
    <property type="entry name" value="PRK13169.1-2"/>
    <property type="match status" value="1"/>
</dbReference>
<dbReference type="Pfam" id="PF06156">
    <property type="entry name" value="YabA"/>
    <property type="match status" value="1"/>
</dbReference>
<dbReference type="PIRSF" id="PIRSF021439">
    <property type="entry name" value="DUF972"/>
    <property type="match status" value="1"/>
</dbReference>
<name>YABA_STAS1</name>
<sequence>MNRSDIFEKLANLEANINQINSDMGNLKKLTVEVIEENVALQIENENLKTLIDKEEKSKAVENGKKLPKKQPLRSKDNLAMLYKEGFHICNGELFGKHRKGDDCLFCLEVLSE</sequence>
<gene>
    <name evidence="1" type="primary">yabA</name>
    <name type="ordered locus">SSP2270</name>
</gene>
<organism>
    <name type="scientific">Staphylococcus saprophyticus subsp. saprophyticus (strain ATCC 15305 / DSM 20229 / NCIMB 8711 / NCTC 7292 / S-41)</name>
    <dbReference type="NCBI Taxonomy" id="342451"/>
    <lineage>
        <taxon>Bacteria</taxon>
        <taxon>Bacillati</taxon>
        <taxon>Bacillota</taxon>
        <taxon>Bacilli</taxon>
        <taxon>Bacillales</taxon>
        <taxon>Staphylococcaceae</taxon>
        <taxon>Staphylococcus</taxon>
    </lineage>
</organism>
<accession>Q49UZ5</accession>
<evidence type="ECO:0000255" key="1">
    <source>
        <dbReference type="HAMAP-Rule" id="MF_01159"/>
    </source>
</evidence>